<organism>
    <name type="scientific">Homo sapiens</name>
    <name type="common">Human</name>
    <dbReference type="NCBI Taxonomy" id="9606"/>
    <lineage>
        <taxon>Eukaryota</taxon>
        <taxon>Metazoa</taxon>
        <taxon>Chordata</taxon>
        <taxon>Craniata</taxon>
        <taxon>Vertebrata</taxon>
        <taxon>Euteleostomi</taxon>
        <taxon>Mammalia</taxon>
        <taxon>Eutheria</taxon>
        <taxon>Euarchontoglires</taxon>
        <taxon>Primates</taxon>
        <taxon>Haplorrhini</taxon>
        <taxon>Catarrhini</taxon>
        <taxon>Hominidae</taxon>
        <taxon>Homo</taxon>
    </lineage>
</organism>
<comment type="function">
    <text evidence="5 7 9">Acts as a co-chaperone with HSPA8/Hsc70; required to promote protein folding and trafficking, prevent aggregation of client proteins, and promote unfolded proteins to endoplasmic reticulum-associated degradation (ERAD) pathway (PubMed:24732912). Acts by determining HSPA8/Hsc70's ATPase and polypeptide-binding activities (PubMed:24732912). Can also act independently of HSPA8/Hsc70: together with DNAJB12, acts as a chaperone that promotes maturation of potassium channels KCND2 and KCNH2 by stabilizing nascent channel subunits and assembling them into tetramers (PubMed:27916661). While stabilization of nascent channel proteins is dependent on HSPA8/Hsc70, the process of oligomerization of channel subunits is independent of HSPA8/Hsc70 (PubMed:27916661). When overexpressed, forms membranous structures together with DNAJB12 and HSPA8/Hsc70 within the nucleus; the role of these structures, named DJANGOs, is still unclear (PubMed:24732912).</text>
</comment>
<comment type="function">
    <text evidence="4 6">(Microbial infection) In case of infection by polyomavirus, involved in the virus endoplasmic reticulum membrane penetration and infection (PubMed:21673190, PubMed:24675744).</text>
</comment>
<comment type="subunit">
    <text evidence="5 6 7 9">Interacts (via J domain) with HSPA8/Hsc70 (PubMed:23018488, PubMed:24732912, PubMed:27916661). Forms a multiprotein complex, at least composed of DNAJB12, DNAJB14, HSPA8/Hsc70 and SGTA; interaction with DNAJB14 and HSPA8/Hsc70 is direct (PubMed:24675744).</text>
</comment>
<comment type="interaction">
    <interactant intactId="EBI-2689808">
        <id>Q8TBM8</id>
    </interactant>
    <interactant intactId="EBI-349854">
        <id>P13569</id>
        <label>CFTR</label>
    </interactant>
    <organismsDiffer>false</organismsDiffer>
    <experiments>3</experiments>
</comment>
<comment type="subcellular location">
    <subcellularLocation>
        <location evidence="5 7 9">Endoplasmic reticulum membrane</location>
        <topology evidence="1">Single-pass membrane protein</topology>
    </subcellularLocation>
    <subcellularLocation>
        <location evidence="7">Nucleus membrane</location>
        <topology evidence="1">Single-pass membrane protein</topology>
    </subcellularLocation>
    <text evidence="5 7 9">Localizes to the endoplasmic reticulum membrane (PubMed:23018488, PubMed:24732912, PubMed:27916661). When overexpressed, forms membranous structures in the nucleus (PubMed:24732912).</text>
</comment>
<comment type="subcellular location">
    <text evidence="8">(Microbial infection) Upon SV40 infection, colocalizes with BCAP31, DNAJB12 and DNAJC18 in punctate structures within the endoplasmic reticulum membrane.</text>
</comment>
<comment type="alternative products">
    <event type="alternative splicing"/>
    <isoform>
        <id>Q8TBM8-1</id>
        <name>1</name>
        <sequence type="displayed"/>
    </isoform>
    <isoform>
        <id>Q8TBM8-2</id>
        <name>2</name>
        <sequence type="described" ref="VSP_024006 VSP_024007"/>
    </isoform>
</comment>
<comment type="similarity">
    <text evidence="13">Belongs to the DnaJ family. DNAJB12/DNAJB14 subfamily.</text>
</comment>
<comment type="sequence caution" evidence="13">
    <conflict type="erroneous termination">
        <sequence resource="EMBL-CDS" id="AAQ88639"/>
    </conflict>
    <text>Truncated C-terminus.</text>
</comment>
<comment type="sequence caution" evidence="13">
    <conflict type="erroneous initiation">
        <sequence resource="EMBL-CDS" id="BAB14645"/>
    </conflict>
    <text>Truncated N-terminus.</text>
</comment>
<comment type="sequence caution" evidence="13">
    <conflict type="erroneous termination">
        <sequence resource="EMBL-CDS" id="BAB14893"/>
    </conflict>
    <text>Truncated C-terminus.</text>
</comment>
<comment type="sequence caution" evidence="13">
    <conflict type="miscellaneous discrepancy">
        <sequence resource="EMBL-CDS" id="CAD97796"/>
    </conflict>
    <text>Intron retention.</text>
</comment>
<reference key="1">
    <citation type="submission" date="2002-11" db="EMBL/GenBank/DDBJ databases">
        <authorList>
            <person name="Sha J.H."/>
            <person name="Zhou Z.M."/>
            <person name="Xu M."/>
        </authorList>
    </citation>
    <scope>NUCLEOTIDE SEQUENCE [MRNA] (ISOFORM 2)</scope>
    <source>
        <tissue>Testis</tissue>
    </source>
</reference>
<reference key="2">
    <citation type="journal article" date="2003" name="Genome Res.">
        <title>The secreted protein discovery initiative (SPDI), a large-scale effort to identify novel human secreted and transmembrane proteins: a bioinformatics assessment.</title>
        <authorList>
            <person name="Clark H.F."/>
            <person name="Gurney A.L."/>
            <person name="Abaya E."/>
            <person name="Baker K."/>
            <person name="Baldwin D.T."/>
            <person name="Brush J."/>
            <person name="Chen J."/>
            <person name="Chow B."/>
            <person name="Chui C."/>
            <person name="Crowley C."/>
            <person name="Currell B."/>
            <person name="Deuel B."/>
            <person name="Dowd P."/>
            <person name="Eaton D."/>
            <person name="Foster J.S."/>
            <person name="Grimaldi C."/>
            <person name="Gu Q."/>
            <person name="Hass P.E."/>
            <person name="Heldens S."/>
            <person name="Huang A."/>
            <person name="Kim H.S."/>
            <person name="Klimowski L."/>
            <person name="Jin Y."/>
            <person name="Johnson S."/>
            <person name="Lee J."/>
            <person name="Lewis L."/>
            <person name="Liao D."/>
            <person name="Mark M.R."/>
            <person name="Robbie E."/>
            <person name="Sanchez C."/>
            <person name="Schoenfeld J."/>
            <person name="Seshagiri S."/>
            <person name="Simmons L."/>
            <person name="Singh J."/>
            <person name="Smith V."/>
            <person name="Stinson J."/>
            <person name="Vagts A."/>
            <person name="Vandlen R.L."/>
            <person name="Watanabe C."/>
            <person name="Wieand D."/>
            <person name="Woods K."/>
            <person name="Xie M.-H."/>
            <person name="Yansura D.G."/>
            <person name="Yi S."/>
            <person name="Yu G."/>
            <person name="Yuan J."/>
            <person name="Zhang M."/>
            <person name="Zhang Z."/>
            <person name="Goddard A.D."/>
            <person name="Wood W.I."/>
            <person name="Godowski P.J."/>
            <person name="Gray A.M."/>
        </authorList>
    </citation>
    <scope>NUCLEOTIDE SEQUENCE [LARGE SCALE MRNA] (ISOFORM 1)</scope>
</reference>
<reference key="3">
    <citation type="journal article" date="2007" name="BMC Genomics">
        <title>The full-ORF clone resource of the German cDNA consortium.</title>
        <authorList>
            <person name="Bechtel S."/>
            <person name="Rosenfelder H."/>
            <person name="Duda A."/>
            <person name="Schmidt C.P."/>
            <person name="Ernst U."/>
            <person name="Wellenreuther R."/>
            <person name="Mehrle A."/>
            <person name="Schuster C."/>
            <person name="Bahr A."/>
            <person name="Bloecker H."/>
            <person name="Heubner D."/>
            <person name="Hoerlein A."/>
            <person name="Michel G."/>
            <person name="Wedler H."/>
            <person name="Koehrer K."/>
            <person name="Ottenwaelder B."/>
            <person name="Poustka A."/>
            <person name="Wiemann S."/>
            <person name="Schupp I."/>
        </authorList>
    </citation>
    <scope>NUCLEOTIDE SEQUENCE [LARGE SCALE MRNA] (ISOFORM 2)</scope>
    <scope>NUCLEOTIDE SEQUENCE [LARGE SCALE MRNA] OF 1-101 (ISOFORM 1)</scope>
    <source>
        <tissue>Fetal kidney</tissue>
        <tissue>Spinal cord</tissue>
    </source>
</reference>
<reference key="4">
    <citation type="journal article" date="2005" name="Nature">
        <title>Generation and annotation of the DNA sequences of human chromosomes 2 and 4.</title>
        <authorList>
            <person name="Hillier L.W."/>
            <person name="Graves T.A."/>
            <person name="Fulton R.S."/>
            <person name="Fulton L.A."/>
            <person name="Pepin K.H."/>
            <person name="Minx P."/>
            <person name="Wagner-McPherson C."/>
            <person name="Layman D."/>
            <person name="Wylie K."/>
            <person name="Sekhon M."/>
            <person name="Becker M.C."/>
            <person name="Fewell G.A."/>
            <person name="Delehaunty K.D."/>
            <person name="Miner T.L."/>
            <person name="Nash W.E."/>
            <person name="Kremitzki C."/>
            <person name="Oddy L."/>
            <person name="Du H."/>
            <person name="Sun H."/>
            <person name="Bradshaw-Cordum H."/>
            <person name="Ali J."/>
            <person name="Carter J."/>
            <person name="Cordes M."/>
            <person name="Harris A."/>
            <person name="Isak A."/>
            <person name="van Brunt A."/>
            <person name="Nguyen C."/>
            <person name="Du F."/>
            <person name="Courtney L."/>
            <person name="Kalicki J."/>
            <person name="Ozersky P."/>
            <person name="Abbott S."/>
            <person name="Armstrong J."/>
            <person name="Belter E.A."/>
            <person name="Caruso L."/>
            <person name="Cedroni M."/>
            <person name="Cotton M."/>
            <person name="Davidson T."/>
            <person name="Desai A."/>
            <person name="Elliott G."/>
            <person name="Erb T."/>
            <person name="Fronick C."/>
            <person name="Gaige T."/>
            <person name="Haakenson W."/>
            <person name="Haglund K."/>
            <person name="Holmes A."/>
            <person name="Harkins R."/>
            <person name="Kim K."/>
            <person name="Kruchowski S.S."/>
            <person name="Strong C.M."/>
            <person name="Grewal N."/>
            <person name="Goyea E."/>
            <person name="Hou S."/>
            <person name="Levy A."/>
            <person name="Martinka S."/>
            <person name="Mead K."/>
            <person name="McLellan M.D."/>
            <person name="Meyer R."/>
            <person name="Randall-Maher J."/>
            <person name="Tomlinson C."/>
            <person name="Dauphin-Kohlberg S."/>
            <person name="Kozlowicz-Reilly A."/>
            <person name="Shah N."/>
            <person name="Swearengen-Shahid S."/>
            <person name="Snider J."/>
            <person name="Strong J.T."/>
            <person name="Thompson J."/>
            <person name="Yoakum M."/>
            <person name="Leonard S."/>
            <person name="Pearman C."/>
            <person name="Trani L."/>
            <person name="Radionenko M."/>
            <person name="Waligorski J.E."/>
            <person name="Wang C."/>
            <person name="Rock S.M."/>
            <person name="Tin-Wollam A.-M."/>
            <person name="Maupin R."/>
            <person name="Latreille P."/>
            <person name="Wendl M.C."/>
            <person name="Yang S.-P."/>
            <person name="Pohl C."/>
            <person name="Wallis J.W."/>
            <person name="Spieth J."/>
            <person name="Bieri T.A."/>
            <person name="Berkowicz N."/>
            <person name="Nelson J.O."/>
            <person name="Osborne J."/>
            <person name="Ding L."/>
            <person name="Meyer R."/>
            <person name="Sabo A."/>
            <person name="Shotland Y."/>
            <person name="Sinha P."/>
            <person name="Wohldmann P.E."/>
            <person name="Cook L.L."/>
            <person name="Hickenbotham M.T."/>
            <person name="Eldred J."/>
            <person name="Williams D."/>
            <person name="Jones T.A."/>
            <person name="She X."/>
            <person name="Ciccarelli F.D."/>
            <person name="Izaurralde E."/>
            <person name="Taylor J."/>
            <person name="Schmutz J."/>
            <person name="Myers R.M."/>
            <person name="Cox D.R."/>
            <person name="Huang X."/>
            <person name="McPherson J.D."/>
            <person name="Mardis E.R."/>
            <person name="Clifton S.W."/>
            <person name="Warren W.C."/>
            <person name="Chinwalla A.T."/>
            <person name="Eddy S.R."/>
            <person name="Marra M.A."/>
            <person name="Ovcharenko I."/>
            <person name="Furey T.S."/>
            <person name="Miller W."/>
            <person name="Eichler E.E."/>
            <person name="Bork P."/>
            <person name="Suyama M."/>
            <person name="Torrents D."/>
            <person name="Waterston R.H."/>
            <person name="Wilson R.K."/>
        </authorList>
    </citation>
    <scope>NUCLEOTIDE SEQUENCE [LARGE SCALE GENOMIC DNA]</scope>
</reference>
<reference key="5">
    <citation type="journal article" date="2004" name="Genome Res.">
        <title>The status, quality, and expansion of the NIH full-length cDNA project: the Mammalian Gene Collection (MGC).</title>
        <authorList>
            <consortium name="The MGC Project Team"/>
        </authorList>
    </citation>
    <scope>NUCLEOTIDE SEQUENCE [LARGE SCALE MRNA] (ISOFORM 1)</scope>
    <source>
        <tissue>Testis</tissue>
    </source>
</reference>
<reference key="6">
    <citation type="journal article" date="2004" name="Nat. Genet.">
        <title>Complete sequencing and characterization of 21,243 full-length human cDNAs.</title>
        <authorList>
            <person name="Ota T."/>
            <person name="Suzuki Y."/>
            <person name="Nishikawa T."/>
            <person name="Otsuki T."/>
            <person name="Sugiyama T."/>
            <person name="Irie R."/>
            <person name="Wakamatsu A."/>
            <person name="Hayashi K."/>
            <person name="Sato H."/>
            <person name="Nagai K."/>
            <person name="Kimura K."/>
            <person name="Makita H."/>
            <person name="Sekine M."/>
            <person name="Obayashi M."/>
            <person name="Nishi T."/>
            <person name="Shibahara T."/>
            <person name="Tanaka T."/>
            <person name="Ishii S."/>
            <person name="Yamamoto J."/>
            <person name="Saito K."/>
            <person name="Kawai Y."/>
            <person name="Isono Y."/>
            <person name="Nakamura Y."/>
            <person name="Nagahari K."/>
            <person name="Murakami K."/>
            <person name="Yasuda T."/>
            <person name="Iwayanagi T."/>
            <person name="Wagatsuma M."/>
            <person name="Shiratori A."/>
            <person name="Sudo H."/>
            <person name="Hosoiri T."/>
            <person name="Kaku Y."/>
            <person name="Kodaira H."/>
            <person name="Kondo H."/>
            <person name="Sugawara M."/>
            <person name="Takahashi M."/>
            <person name="Kanda K."/>
            <person name="Yokoi T."/>
            <person name="Furuya T."/>
            <person name="Kikkawa E."/>
            <person name="Omura Y."/>
            <person name="Abe K."/>
            <person name="Kamihara K."/>
            <person name="Katsuta N."/>
            <person name="Sato K."/>
            <person name="Tanikawa M."/>
            <person name="Yamazaki M."/>
            <person name="Ninomiya K."/>
            <person name="Ishibashi T."/>
            <person name="Yamashita H."/>
            <person name="Murakawa K."/>
            <person name="Fujimori K."/>
            <person name="Tanai H."/>
            <person name="Kimata M."/>
            <person name="Watanabe M."/>
            <person name="Hiraoka S."/>
            <person name="Chiba Y."/>
            <person name="Ishida S."/>
            <person name="Ono Y."/>
            <person name="Takiguchi S."/>
            <person name="Watanabe S."/>
            <person name="Yosida M."/>
            <person name="Hotuta T."/>
            <person name="Kusano J."/>
            <person name="Kanehori K."/>
            <person name="Takahashi-Fujii A."/>
            <person name="Hara H."/>
            <person name="Tanase T.-O."/>
            <person name="Nomura Y."/>
            <person name="Togiya S."/>
            <person name="Komai F."/>
            <person name="Hara R."/>
            <person name="Takeuchi K."/>
            <person name="Arita M."/>
            <person name="Imose N."/>
            <person name="Musashino K."/>
            <person name="Yuuki H."/>
            <person name="Oshima A."/>
            <person name="Sasaki N."/>
            <person name="Aotsuka S."/>
            <person name="Yoshikawa Y."/>
            <person name="Matsunawa H."/>
            <person name="Ichihara T."/>
            <person name="Shiohata N."/>
            <person name="Sano S."/>
            <person name="Moriya S."/>
            <person name="Momiyama H."/>
            <person name="Satoh N."/>
            <person name="Takami S."/>
            <person name="Terashima Y."/>
            <person name="Suzuki O."/>
            <person name="Nakagawa S."/>
            <person name="Senoh A."/>
            <person name="Mizoguchi H."/>
            <person name="Goto Y."/>
            <person name="Shimizu F."/>
            <person name="Wakebe H."/>
            <person name="Hishigaki H."/>
            <person name="Watanabe T."/>
            <person name="Sugiyama A."/>
            <person name="Takemoto M."/>
            <person name="Kawakami B."/>
            <person name="Yamazaki M."/>
            <person name="Watanabe K."/>
            <person name="Kumagai A."/>
            <person name="Itakura S."/>
            <person name="Fukuzumi Y."/>
            <person name="Fujimori Y."/>
            <person name="Komiyama M."/>
            <person name="Tashiro H."/>
            <person name="Tanigami A."/>
            <person name="Fujiwara T."/>
            <person name="Ono T."/>
            <person name="Yamada K."/>
            <person name="Fujii Y."/>
            <person name="Ozaki K."/>
            <person name="Hirao M."/>
            <person name="Ohmori Y."/>
            <person name="Kawabata A."/>
            <person name="Hikiji T."/>
            <person name="Kobatake N."/>
            <person name="Inagaki H."/>
            <person name="Ikema Y."/>
            <person name="Okamoto S."/>
            <person name="Okitani R."/>
            <person name="Kawakami T."/>
            <person name="Noguchi S."/>
            <person name="Itoh T."/>
            <person name="Shigeta K."/>
            <person name="Senba T."/>
            <person name="Matsumura K."/>
            <person name="Nakajima Y."/>
            <person name="Mizuno T."/>
            <person name="Morinaga M."/>
            <person name="Sasaki M."/>
            <person name="Togashi T."/>
            <person name="Oyama M."/>
            <person name="Hata H."/>
            <person name="Watanabe M."/>
            <person name="Komatsu T."/>
            <person name="Mizushima-Sugano J."/>
            <person name="Satoh T."/>
            <person name="Shirai Y."/>
            <person name="Takahashi Y."/>
            <person name="Nakagawa K."/>
            <person name="Okumura K."/>
            <person name="Nagase T."/>
            <person name="Nomura N."/>
            <person name="Kikuchi H."/>
            <person name="Masuho Y."/>
            <person name="Yamashita R."/>
            <person name="Nakai K."/>
            <person name="Yada T."/>
            <person name="Nakamura Y."/>
            <person name="Ohara O."/>
            <person name="Isogai T."/>
            <person name="Sugano S."/>
        </authorList>
    </citation>
    <scope>NUCLEOTIDE SEQUENCE [LARGE SCALE MRNA] OF 107-379</scope>
    <source>
        <tissue>Placenta</tissue>
    </source>
</reference>
<reference key="7">
    <citation type="journal article" date="2011" name="MBio">
        <title>BiP and multiple DNAJ molecular chaperones in the endoplasmic reticulum are required for efficient simian virus 40 infection.</title>
        <authorList>
            <person name="Goodwin E.C."/>
            <person name="Lipovsky A."/>
            <person name="Inoue T."/>
            <person name="Magaldi T.G."/>
            <person name="Edwards A.P."/>
            <person name="Van Goor K.E."/>
            <person name="Paton A.W."/>
            <person name="Paton J.C."/>
            <person name="Atwood W.J."/>
            <person name="Tsai B."/>
            <person name="DiMaio D."/>
        </authorList>
    </citation>
    <scope>FUNCTION (MICROBIAL INFECTION)</scope>
</reference>
<reference key="8">
    <citation type="journal article" date="2012" name="Cell Struct. Funct.">
        <title>A novel mammalian ER-located J-protein, DNAJB14, can accelerate ERAD of misfolded membrane proteins.</title>
        <authorList>
            <person name="Sopha P."/>
            <person name="Kadokura H."/>
            <person name="Yamamoto Y.H."/>
            <person name="Takeuchi M."/>
            <person name="Saito M."/>
            <person name="Tsuru A."/>
            <person name="Kohno K."/>
        </authorList>
    </citation>
    <scope>FUNCTION</scope>
    <scope>SUBCELLULAR LOCATION</scope>
    <scope>TOPOLOGY</scope>
    <scope>INTERACTION WITH HSPA8</scope>
</reference>
<reference key="9">
    <citation type="journal article" date="2014" name="PLoS ONE">
        <title>Expression of DNAJB12 or DNAJB14 causes coordinate invasion of the nucleus by membranes associated with a novel nuclear pore structure.</title>
        <authorList>
            <person name="Goodwin E.C."/>
            <person name="Motamedi N."/>
            <person name="Lipovsky A."/>
            <person name="Fernandez-Busnadiego R."/>
            <person name="DiMaio D."/>
        </authorList>
    </citation>
    <scope>FUNCTION</scope>
    <scope>SUBCELLULAR LOCATION</scope>
    <scope>INTERACTION WITH HSPA8</scope>
    <scope>MUTAGENESIS OF HIS-136</scope>
</reference>
<reference key="10">
    <citation type="journal article" date="2014" name="PLoS Pathog.">
        <title>A cytosolic chaperone complexes with dynamic membrane J-proteins and mobilizes a nonenveloped virus out of the endoplasmic reticulum.</title>
        <authorList>
            <person name="Walczak C.P."/>
            <person name="Ravindran M.S."/>
            <person name="Inoue T."/>
            <person name="Tsai B."/>
        </authorList>
    </citation>
    <scope>FUNCTION (MICROBIAL INFECTION)</scope>
    <scope>IDENTIFICATION IN A COMPLEX WITH DNAJB12</scope>
</reference>
<reference key="11">
    <citation type="journal article" date="2015" name="J. Virol.">
        <title>The endoplasmic reticulum membrane J protein C18 executes a distinct role in promoting simian virus 40 membrane penetration.</title>
        <authorList>
            <person name="Bagchi P."/>
            <person name="Walczak C.P."/>
            <person name="Tsai B."/>
        </authorList>
    </citation>
    <scope>SUBCELLULAR LOCATION (MICROBIAL INFECTION)</scope>
</reference>
<reference key="12">
    <citation type="journal article" date="2015" name="Proteomics">
        <title>N-terminome analysis of the human mitochondrial proteome.</title>
        <authorList>
            <person name="Vaca Jacome A.S."/>
            <person name="Rabilloud T."/>
            <person name="Schaeffer-Reiss C."/>
            <person name="Rompais M."/>
            <person name="Ayoub D."/>
            <person name="Lane L."/>
            <person name="Bairoch A."/>
            <person name="Van Dorsselaer A."/>
            <person name="Carapito C."/>
        </authorList>
    </citation>
    <scope>IDENTIFICATION BY MASS SPECTROMETRY [LARGE SCALE ANALYSIS]</scope>
</reference>
<reference key="13">
    <citation type="journal article" date="2017" name="Mol. Cell">
        <title>Tetrameric assembly of K(+) channels requires ER-located chaperone proteins.</title>
        <authorList>
            <person name="Li K."/>
            <person name="Jiang Q."/>
            <person name="Bai X."/>
            <person name="Yang Y.F."/>
            <person name="Ruan M.Y."/>
            <person name="Cai S.Q."/>
        </authorList>
    </citation>
    <scope>FUNCTION</scope>
    <scope>SUBCELLULAR LOCATION</scope>
</reference>
<proteinExistence type="evidence at protein level"/>
<evidence type="ECO:0000255" key="1"/>
<evidence type="ECO:0000255" key="2">
    <source>
        <dbReference type="PROSITE-ProRule" id="PRU00286"/>
    </source>
</evidence>
<evidence type="ECO:0000256" key="3">
    <source>
        <dbReference type="SAM" id="MobiDB-lite"/>
    </source>
</evidence>
<evidence type="ECO:0000269" key="4">
    <source>
    </source>
</evidence>
<evidence type="ECO:0000269" key="5">
    <source>
    </source>
</evidence>
<evidence type="ECO:0000269" key="6">
    <source>
    </source>
</evidence>
<evidence type="ECO:0000269" key="7">
    <source>
    </source>
</evidence>
<evidence type="ECO:0000269" key="8">
    <source>
    </source>
</evidence>
<evidence type="ECO:0000269" key="9">
    <source>
    </source>
</evidence>
<evidence type="ECO:0000303" key="10">
    <source>
    </source>
</evidence>
<evidence type="ECO:0000303" key="11">
    <source>
    </source>
</evidence>
<evidence type="ECO:0000303" key="12">
    <source ref="1"/>
</evidence>
<evidence type="ECO:0000305" key="13"/>
<evidence type="ECO:0000312" key="14">
    <source>
        <dbReference type="HGNC" id="HGNC:25881"/>
    </source>
</evidence>
<protein>
    <recommendedName>
        <fullName evidence="14">DnaJ homolog subfamily B member 14</fullName>
    </recommendedName>
</protein>
<feature type="chain" id="PRO_0000281478" description="DnaJ homolog subfamily B member 14">
    <location>
        <begin position="1"/>
        <end position="379"/>
    </location>
</feature>
<feature type="topological domain" description="Cytoplasmic" evidence="1">
    <location>
        <begin position="1"/>
        <end position="244"/>
    </location>
</feature>
<feature type="transmembrane region" description="Helical" evidence="1">
    <location>
        <begin position="245"/>
        <end position="265"/>
    </location>
</feature>
<feature type="topological domain" description="Lumenal" evidence="1">
    <location>
        <begin position="266"/>
        <end position="379"/>
    </location>
</feature>
<feature type="domain" description="J" evidence="2">
    <location>
        <begin position="108"/>
        <end position="172"/>
    </location>
</feature>
<feature type="region of interest" description="Disordered" evidence="3">
    <location>
        <begin position="55"/>
        <end position="94"/>
    </location>
</feature>
<feature type="region of interest" description="Disordered" evidence="3">
    <location>
        <begin position="219"/>
        <end position="241"/>
    </location>
</feature>
<feature type="compositionally biased region" description="Polar residues" evidence="3">
    <location>
        <begin position="69"/>
        <end position="84"/>
    </location>
</feature>
<feature type="splice variant" id="VSP_024006" description="In isoform 2." evidence="11 12">
    <location>
        <begin position="1"/>
        <end position="85"/>
    </location>
</feature>
<feature type="splice variant" id="VSP_024007" description="In isoform 2." evidence="11 12">
    <original>GEGGKGYTKDQVDGVLS</original>
    <variation>MDIGTLIWDGGPVPNTH</variation>
    <location>
        <begin position="86"/>
        <end position="102"/>
    </location>
</feature>
<feature type="mutagenesis site" description="Abolishes interaction with HSPA8/Hsc70." evidence="7">
    <original>H</original>
    <variation>Q</variation>
    <location>
        <position position="136"/>
    </location>
</feature>
<feature type="sequence conflict" description="In Ref. 6; BAB14893." evidence="13" ref="6">
    <original>P</original>
    <variation>L</variation>
    <location>
        <position position="143"/>
    </location>
</feature>
<feature type="sequence conflict" description="In Ref. 1; AAO31693." evidence="13" ref="1">
    <original>N</original>
    <variation>T</variation>
    <location>
        <position position="187"/>
    </location>
</feature>
<keyword id="KW-0025">Alternative splicing</keyword>
<keyword id="KW-0143">Chaperone</keyword>
<keyword id="KW-0256">Endoplasmic reticulum</keyword>
<keyword id="KW-0945">Host-virus interaction</keyword>
<keyword id="KW-0472">Membrane</keyword>
<keyword id="KW-0539">Nucleus</keyword>
<keyword id="KW-1267">Proteomics identification</keyword>
<keyword id="KW-1185">Reference proteome</keyword>
<keyword id="KW-0812">Transmembrane</keyword>
<keyword id="KW-1133">Transmembrane helix</keyword>
<sequence>MEGNRDEAEKCVEIAREALNAGNREKAQRFLQKAEKLYPLPSARALLEIIMKNGSTAGNSPHCRKPSGSGDQSKPNCTKDSTSGSGEGGKGYTKDQVDGVLSINKCKNYYEVLGVTKDAGDEDLKKAYRKLALKFHPDKNHAPGATDAFKKIGNAYAVLSNPEKRKQYDLTGNEEQACNHQNNGRFNFHRGCEADITPEDLFNIFFGGGFPSGSVHSFSNGRAGYSQQHQHRHSGHEREEERGDGGFSVFIQLMPIIVLILVSLLSQLMVSNPPYSLYPRSGTGQTIKMQTENLGVVYYVNKDFKNEYKGMLLQKVEKSVEEDYVTNIRNNCWKERQQKTDMQYAAKVYRDDRLRRKADALSMDNCKELERLTSLYKGG</sequence>
<dbReference type="EMBL" id="AY186740">
    <property type="protein sequence ID" value="AAO31693.1"/>
    <property type="molecule type" value="mRNA"/>
</dbReference>
<dbReference type="EMBL" id="AY358272">
    <property type="protein sequence ID" value="AAQ88639.1"/>
    <property type="status" value="ALT_SEQ"/>
    <property type="molecule type" value="mRNA"/>
</dbReference>
<dbReference type="EMBL" id="AL833076">
    <property type="protein sequence ID" value="CAD89928.1"/>
    <property type="molecule type" value="mRNA"/>
</dbReference>
<dbReference type="EMBL" id="BX537609">
    <property type="protein sequence ID" value="CAD97796.1"/>
    <property type="status" value="ALT_SEQ"/>
    <property type="molecule type" value="mRNA"/>
</dbReference>
<dbReference type="EMBL" id="AC097460">
    <property type="protein sequence ID" value="AAY41012.1"/>
    <property type="molecule type" value="Genomic_DNA"/>
</dbReference>
<dbReference type="EMBL" id="BC022248">
    <property type="protein sequence ID" value="AAH22248.1"/>
    <property type="molecule type" value="mRNA"/>
</dbReference>
<dbReference type="EMBL" id="AK024343">
    <property type="protein sequence ID" value="BAB14893.1"/>
    <property type="status" value="ALT_SEQ"/>
    <property type="molecule type" value="mRNA"/>
</dbReference>
<dbReference type="EMBL" id="AK023700">
    <property type="protein sequence ID" value="BAB14645.1"/>
    <property type="status" value="ALT_INIT"/>
    <property type="molecule type" value="mRNA"/>
</dbReference>
<dbReference type="CCDS" id="CCDS34035.1">
    <molecule id="Q8TBM8-1"/>
</dbReference>
<dbReference type="RefSeq" id="NP_001026893.1">
    <molecule id="Q8TBM8-1"/>
    <property type="nucleotide sequence ID" value="NM_001031723.4"/>
</dbReference>
<dbReference type="RefSeq" id="NP_001265239.1">
    <property type="nucleotide sequence ID" value="NM_001278310.1"/>
</dbReference>
<dbReference type="RefSeq" id="XP_011530564.1">
    <property type="nucleotide sequence ID" value="XM_011532262.2"/>
</dbReference>
<dbReference type="RefSeq" id="XP_011530565.1">
    <property type="nucleotide sequence ID" value="XM_011532263.2"/>
</dbReference>
<dbReference type="RefSeq" id="XP_047272140.1">
    <molecule id="Q8TBM8-2"/>
    <property type="nucleotide sequence ID" value="XM_047416184.1"/>
</dbReference>
<dbReference type="RefSeq" id="XP_054206839.1">
    <molecule id="Q8TBM8-2"/>
    <property type="nucleotide sequence ID" value="XM_054350864.1"/>
</dbReference>
<dbReference type="SMR" id="Q8TBM8"/>
<dbReference type="BioGRID" id="123047">
    <property type="interactions" value="98"/>
</dbReference>
<dbReference type="CORUM" id="Q8TBM8"/>
<dbReference type="FunCoup" id="Q8TBM8">
    <property type="interactions" value="3024"/>
</dbReference>
<dbReference type="IntAct" id="Q8TBM8">
    <property type="interactions" value="17"/>
</dbReference>
<dbReference type="MINT" id="Q8TBM8"/>
<dbReference type="STRING" id="9606.ENSP00000404381"/>
<dbReference type="TCDB" id="1.P.1.1.1">
    <property type="family name" value="the polyoma virus sv40 er penetration channel (vpec) family"/>
</dbReference>
<dbReference type="iPTMnet" id="Q8TBM8"/>
<dbReference type="PhosphoSitePlus" id="Q8TBM8"/>
<dbReference type="BioMuta" id="DNAJB14"/>
<dbReference type="DMDM" id="74751385"/>
<dbReference type="jPOST" id="Q8TBM8"/>
<dbReference type="MassIVE" id="Q8TBM8"/>
<dbReference type="PaxDb" id="9606-ENSP00000404381"/>
<dbReference type="PeptideAtlas" id="Q8TBM8"/>
<dbReference type="ProteomicsDB" id="74031">
    <molecule id="Q8TBM8-1"/>
</dbReference>
<dbReference type="ProteomicsDB" id="74032">
    <molecule id="Q8TBM8-2"/>
</dbReference>
<dbReference type="Pumba" id="Q8TBM8"/>
<dbReference type="Antibodypedia" id="45017">
    <property type="antibodies" value="91 antibodies from 22 providers"/>
</dbReference>
<dbReference type="DNASU" id="79982"/>
<dbReference type="Ensembl" id="ENST00000442697.7">
    <molecule id="Q8TBM8-1"/>
    <property type="protein sequence ID" value="ENSP00000404381.2"/>
    <property type="gene ID" value="ENSG00000164031.17"/>
</dbReference>
<dbReference type="GeneID" id="79982"/>
<dbReference type="KEGG" id="hsa:79982"/>
<dbReference type="MANE-Select" id="ENST00000442697.7">
    <property type="protein sequence ID" value="ENSP00000404381.2"/>
    <property type="RefSeq nucleotide sequence ID" value="NM_001031723.4"/>
    <property type="RefSeq protein sequence ID" value="NP_001026893.1"/>
</dbReference>
<dbReference type="UCSC" id="uc003hvl.5">
    <molecule id="Q8TBM8-1"/>
    <property type="organism name" value="human"/>
</dbReference>
<dbReference type="AGR" id="HGNC:25881"/>
<dbReference type="CTD" id="79982"/>
<dbReference type="DisGeNET" id="79982"/>
<dbReference type="GeneCards" id="DNAJB14"/>
<dbReference type="HGNC" id="HGNC:25881">
    <property type="gene designation" value="DNAJB14"/>
</dbReference>
<dbReference type="HPA" id="ENSG00000164031">
    <property type="expression patterns" value="Low tissue specificity"/>
</dbReference>
<dbReference type="MIM" id="617487">
    <property type="type" value="gene"/>
</dbReference>
<dbReference type="neXtProt" id="NX_Q8TBM8"/>
<dbReference type="OpenTargets" id="ENSG00000164031"/>
<dbReference type="PharmGKB" id="PA142671973"/>
<dbReference type="VEuPathDB" id="HostDB:ENSG00000164031"/>
<dbReference type="eggNOG" id="KOG0714">
    <property type="taxonomic scope" value="Eukaryota"/>
</dbReference>
<dbReference type="GeneTree" id="ENSGT00940000157887"/>
<dbReference type="HOGENOM" id="CLU_043579_3_0_1"/>
<dbReference type="InParanoid" id="Q8TBM8"/>
<dbReference type="OMA" id="DDRMRKK"/>
<dbReference type="OrthoDB" id="442087at2759"/>
<dbReference type="PAN-GO" id="Q8TBM8">
    <property type="GO annotations" value="5 GO annotations based on evolutionary models"/>
</dbReference>
<dbReference type="PhylomeDB" id="Q8TBM8"/>
<dbReference type="TreeFam" id="TF105145"/>
<dbReference type="PathwayCommons" id="Q8TBM8"/>
<dbReference type="SignaLink" id="Q8TBM8"/>
<dbReference type="BioGRID-ORCS" id="79982">
    <property type="hits" value="13 hits in 1152 CRISPR screens"/>
</dbReference>
<dbReference type="ChiTaRS" id="DNAJB14">
    <property type="organism name" value="human"/>
</dbReference>
<dbReference type="GenomeRNAi" id="79982"/>
<dbReference type="Pharos" id="Q8TBM8">
    <property type="development level" value="Tbio"/>
</dbReference>
<dbReference type="PRO" id="PR:Q8TBM8"/>
<dbReference type="Proteomes" id="UP000005640">
    <property type="component" value="Chromosome 4"/>
</dbReference>
<dbReference type="RNAct" id="Q8TBM8">
    <property type="molecule type" value="protein"/>
</dbReference>
<dbReference type="Bgee" id="ENSG00000164031">
    <property type="expression patterns" value="Expressed in lateral nuclear group of thalamus and 204 other cell types or tissues"/>
</dbReference>
<dbReference type="ExpressionAtlas" id="Q8TBM8">
    <property type="expression patterns" value="baseline and differential"/>
</dbReference>
<dbReference type="GO" id="GO:0005783">
    <property type="term" value="C:endoplasmic reticulum"/>
    <property type="evidence" value="ECO:0000314"/>
    <property type="project" value="UniProtKB"/>
</dbReference>
<dbReference type="GO" id="GO:0005789">
    <property type="term" value="C:endoplasmic reticulum membrane"/>
    <property type="evidence" value="ECO:0000318"/>
    <property type="project" value="GO_Central"/>
</dbReference>
<dbReference type="GO" id="GO:0016020">
    <property type="term" value="C:membrane"/>
    <property type="evidence" value="ECO:0007005"/>
    <property type="project" value="UniProtKB"/>
</dbReference>
<dbReference type="GO" id="GO:0031965">
    <property type="term" value="C:nuclear membrane"/>
    <property type="evidence" value="ECO:0007669"/>
    <property type="project" value="UniProtKB-SubCell"/>
</dbReference>
<dbReference type="GO" id="GO:0030544">
    <property type="term" value="F:Hsp70 protein binding"/>
    <property type="evidence" value="ECO:0000353"/>
    <property type="project" value="UniProtKB"/>
</dbReference>
<dbReference type="GO" id="GO:0071218">
    <property type="term" value="P:cellular response to misfolded protein"/>
    <property type="evidence" value="ECO:0000318"/>
    <property type="project" value="GO_Central"/>
</dbReference>
<dbReference type="GO" id="GO:0051085">
    <property type="term" value="P:chaperone cofactor-dependent protein refolding"/>
    <property type="evidence" value="ECO:0000314"/>
    <property type="project" value="UniProtKB"/>
</dbReference>
<dbReference type="GO" id="GO:0065003">
    <property type="term" value="P:protein-containing complex assembly"/>
    <property type="evidence" value="ECO:0000314"/>
    <property type="project" value="UniProtKB"/>
</dbReference>
<dbReference type="CDD" id="cd06257">
    <property type="entry name" value="DnaJ"/>
    <property type="match status" value="1"/>
</dbReference>
<dbReference type="FunFam" id="1.10.287.110:FF:000004">
    <property type="entry name" value="DnaJ (Hsp40) homolog, subfamily B, member 14"/>
    <property type="match status" value="1"/>
</dbReference>
<dbReference type="Gene3D" id="1.10.287.110">
    <property type="entry name" value="DnaJ domain"/>
    <property type="match status" value="1"/>
</dbReference>
<dbReference type="InterPro" id="IPR001623">
    <property type="entry name" value="DnaJ_domain"/>
</dbReference>
<dbReference type="InterPro" id="IPR018253">
    <property type="entry name" value="DnaJ_domain_CS"/>
</dbReference>
<dbReference type="InterPro" id="IPR051100">
    <property type="entry name" value="DnaJ_subfamily_B/C"/>
</dbReference>
<dbReference type="InterPro" id="IPR015399">
    <property type="entry name" value="DUF1977_DnaJ-like"/>
</dbReference>
<dbReference type="InterPro" id="IPR036869">
    <property type="entry name" value="J_dom_sf"/>
</dbReference>
<dbReference type="PANTHER" id="PTHR43908">
    <property type="entry name" value="AT29763P-RELATED"/>
    <property type="match status" value="1"/>
</dbReference>
<dbReference type="PANTHER" id="PTHR43908:SF4">
    <property type="entry name" value="DNAJ HOMOLOG SUBFAMILY B MEMBER 14"/>
    <property type="match status" value="1"/>
</dbReference>
<dbReference type="Pfam" id="PF00226">
    <property type="entry name" value="DnaJ"/>
    <property type="match status" value="1"/>
</dbReference>
<dbReference type="Pfam" id="PF09320">
    <property type="entry name" value="DUF1977"/>
    <property type="match status" value="1"/>
</dbReference>
<dbReference type="PRINTS" id="PR00625">
    <property type="entry name" value="JDOMAIN"/>
</dbReference>
<dbReference type="SMART" id="SM00271">
    <property type="entry name" value="DnaJ"/>
    <property type="match status" value="1"/>
</dbReference>
<dbReference type="SUPFAM" id="SSF46565">
    <property type="entry name" value="Chaperone J-domain"/>
    <property type="match status" value="1"/>
</dbReference>
<dbReference type="PROSITE" id="PS00636">
    <property type="entry name" value="DNAJ_1"/>
    <property type="match status" value="1"/>
</dbReference>
<dbReference type="PROSITE" id="PS50076">
    <property type="entry name" value="DNAJ_2"/>
    <property type="match status" value="1"/>
</dbReference>
<name>DJB14_HUMAN</name>
<accession>Q8TBM8</accession>
<accession>Q6UXN1</accession>
<accession>Q7Z3P0</accession>
<accession>Q86TA7</accession>
<accession>Q86TM0</accession>
<accession>Q9GZU9</accession>
<gene>
    <name evidence="14" type="primary">DNAJB14</name>
    <name evidence="10" type="ORF">UNQ9427/PRO34683</name>
</gene>